<gene>
    <name type="primary">aroH</name>
    <name type="ordered locus">bbp_118</name>
</gene>
<comment type="function">
    <text>Stereospecific condensation of phosphoenolpyruvate (PEP) and D-erythrose-4-phosphate (E4P) giving rise to 3-deoxy-D-arabino-heptulosonate-7-phosphate (DAHP).</text>
</comment>
<comment type="catalytic activity">
    <reaction>
        <text>D-erythrose 4-phosphate + phosphoenolpyruvate + H2O = 7-phospho-2-dehydro-3-deoxy-D-arabino-heptonate + phosphate</text>
        <dbReference type="Rhea" id="RHEA:14717"/>
        <dbReference type="ChEBI" id="CHEBI:15377"/>
        <dbReference type="ChEBI" id="CHEBI:16897"/>
        <dbReference type="ChEBI" id="CHEBI:43474"/>
        <dbReference type="ChEBI" id="CHEBI:58394"/>
        <dbReference type="ChEBI" id="CHEBI:58702"/>
        <dbReference type="EC" id="2.5.1.54"/>
    </reaction>
</comment>
<comment type="pathway">
    <text>Metabolic intermediate biosynthesis; chorismate biosynthesis; chorismate from D-erythrose 4-phosphate and phosphoenolpyruvate: step 1/7.</text>
</comment>
<comment type="similarity">
    <text evidence="1">Belongs to the class-I DAHP synthase family.</text>
</comment>
<name>AROH_BUCBP</name>
<organism>
    <name type="scientific">Buchnera aphidicola subsp. Baizongia pistaciae (strain Bp)</name>
    <dbReference type="NCBI Taxonomy" id="224915"/>
    <lineage>
        <taxon>Bacteria</taxon>
        <taxon>Pseudomonadati</taxon>
        <taxon>Pseudomonadota</taxon>
        <taxon>Gammaproteobacteria</taxon>
        <taxon>Enterobacterales</taxon>
        <taxon>Erwiniaceae</taxon>
        <taxon>Buchnera</taxon>
    </lineage>
</organism>
<proteinExistence type="inferred from homology"/>
<feature type="chain" id="PRO_0000140839" description="Phospho-2-dehydro-3-deoxyheptonate aldolase, Trp-sensitive">
    <location>
        <begin position="1"/>
        <end position="348"/>
    </location>
</feature>
<reference key="1">
    <citation type="journal article" date="2003" name="Proc. Natl. Acad. Sci. U.S.A.">
        <title>Reductive genome evolution in Buchnera aphidicola.</title>
        <authorList>
            <person name="van Ham R.C.H.J."/>
            <person name="Kamerbeek J."/>
            <person name="Palacios C."/>
            <person name="Rausell C."/>
            <person name="Abascal F."/>
            <person name="Bastolla U."/>
            <person name="Fernandez J.M."/>
            <person name="Jimenez L."/>
            <person name="Postigo M."/>
            <person name="Silva F.J."/>
            <person name="Tamames J."/>
            <person name="Viguera E."/>
            <person name="Latorre A."/>
            <person name="Valencia A."/>
            <person name="Moran F."/>
            <person name="Moya A."/>
        </authorList>
    </citation>
    <scope>NUCLEOTIDE SEQUENCE [LARGE SCALE GENOMIC DNA]</scope>
    <source>
        <strain>Bp</strain>
    </source>
</reference>
<evidence type="ECO:0000305" key="1"/>
<sequence length="348" mass="38539">MKKTDELRTIRIDPLVTPAELAQRHVITPSIMDTVISTRKNIANIMTGLDPRLLVIIGPCSVHDPVAAVEYAGRLQVLRKKYESRLEIVMRTYFEKPRTVIGWKGLISDPDLNGSFHVNNGLSIARKLLLDINKLGVPAATEFLDMVIGQFIADLISWGAIGARTTESQIHREMASALSCPVGFKNGTDGNIRIAVDAIRAASVEHLFLAPNKYGQMTINYTSGNPFGHVIMRGGKSPNYHAKDIAIAIKYLHEFTLSEYLMIDFSHGNCLKQHRRQLDVGESIAKQIRDGSTAIFGVMIESFLEEGSQKVIDNKSLVYGKSITDPCLGWNDSAFLLEKLANAVDSRF</sequence>
<dbReference type="EC" id="2.5.1.54"/>
<dbReference type="EMBL" id="AE016826">
    <property type="protein sequence ID" value="AAO26852.1"/>
    <property type="molecule type" value="Genomic_DNA"/>
</dbReference>
<dbReference type="RefSeq" id="WP_011091253.1">
    <property type="nucleotide sequence ID" value="NC_004545.1"/>
</dbReference>
<dbReference type="SMR" id="Q89AW0"/>
<dbReference type="STRING" id="224915.bbp_118"/>
<dbReference type="KEGG" id="bab:bbp_118"/>
<dbReference type="eggNOG" id="COG0722">
    <property type="taxonomic scope" value="Bacteria"/>
</dbReference>
<dbReference type="HOGENOM" id="CLU_030903_0_1_6"/>
<dbReference type="OrthoDB" id="9807331at2"/>
<dbReference type="UniPathway" id="UPA00053">
    <property type="reaction ID" value="UER00084"/>
</dbReference>
<dbReference type="Proteomes" id="UP000000601">
    <property type="component" value="Chromosome"/>
</dbReference>
<dbReference type="GO" id="GO:0005737">
    <property type="term" value="C:cytoplasm"/>
    <property type="evidence" value="ECO:0007669"/>
    <property type="project" value="TreeGrafter"/>
</dbReference>
<dbReference type="GO" id="GO:0003849">
    <property type="term" value="F:3-deoxy-7-phosphoheptulonate synthase activity"/>
    <property type="evidence" value="ECO:0007669"/>
    <property type="project" value="UniProtKB-EC"/>
</dbReference>
<dbReference type="GO" id="GO:0008652">
    <property type="term" value="P:amino acid biosynthetic process"/>
    <property type="evidence" value="ECO:0007669"/>
    <property type="project" value="UniProtKB-KW"/>
</dbReference>
<dbReference type="GO" id="GO:0009073">
    <property type="term" value="P:aromatic amino acid family biosynthetic process"/>
    <property type="evidence" value="ECO:0007669"/>
    <property type="project" value="UniProtKB-KW"/>
</dbReference>
<dbReference type="GO" id="GO:0009423">
    <property type="term" value="P:chorismate biosynthetic process"/>
    <property type="evidence" value="ECO:0007669"/>
    <property type="project" value="UniProtKB-UniPathway"/>
</dbReference>
<dbReference type="FunFam" id="3.20.20.70:FF:000005">
    <property type="entry name" value="Phospho-2-dehydro-3-deoxyheptonate aldolase"/>
    <property type="match status" value="1"/>
</dbReference>
<dbReference type="Gene3D" id="3.20.20.70">
    <property type="entry name" value="Aldolase class I"/>
    <property type="match status" value="1"/>
</dbReference>
<dbReference type="InterPro" id="IPR013785">
    <property type="entry name" value="Aldolase_TIM"/>
</dbReference>
<dbReference type="InterPro" id="IPR006218">
    <property type="entry name" value="DAHP1/KDSA"/>
</dbReference>
<dbReference type="InterPro" id="IPR006219">
    <property type="entry name" value="DAHP_synth_1"/>
</dbReference>
<dbReference type="NCBIfam" id="TIGR00034">
    <property type="entry name" value="aroFGH"/>
    <property type="match status" value="1"/>
</dbReference>
<dbReference type="NCBIfam" id="NF009395">
    <property type="entry name" value="PRK12755.1"/>
    <property type="match status" value="1"/>
</dbReference>
<dbReference type="NCBIfam" id="NF009396">
    <property type="entry name" value="PRK12756.1"/>
    <property type="match status" value="1"/>
</dbReference>
<dbReference type="PANTHER" id="PTHR21225">
    <property type="entry name" value="PHOSPHO-2-DEHYDRO-3-DEOXYHEPTONATE ALDOLASE DAHP SYNTHETASE"/>
    <property type="match status" value="1"/>
</dbReference>
<dbReference type="PANTHER" id="PTHR21225:SF6">
    <property type="entry name" value="PHOSPHO-2-DEHYDRO-3-DEOXYHEPTONATE ALDOLASE, TRP-SENSITIVE"/>
    <property type="match status" value="1"/>
</dbReference>
<dbReference type="Pfam" id="PF00793">
    <property type="entry name" value="DAHP_synth_1"/>
    <property type="match status" value="1"/>
</dbReference>
<dbReference type="PIRSF" id="PIRSF001361">
    <property type="entry name" value="DAHP_synthase"/>
    <property type="match status" value="1"/>
</dbReference>
<dbReference type="SUPFAM" id="SSF51569">
    <property type="entry name" value="Aldolase"/>
    <property type="match status" value="1"/>
</dbReference>
<keyword id="KW-0028">Amino-acid biosynthesis</keyword>
<keyword id="KW-0057">Aromatic amino acid biosynthesis</keyword>
<keyword id="KW-1185">Reference proteome</keyword>
<keyword id="KW-0808">Transferase</keyword>
<accession>Q89AW0</accession>
<protein>
    <recommendedName>
        <fullName>Phospho-2-dehydro-3-deoxyheptonate aldolase, Trp-sensitive</fullName>
        <ecNumber>2.5.1.54</ecNumber>
    </recommendedName>
    <alternativeName>
        <fullName>3-deoxy-D-arabino-heptulosonate 7-phosphate synthase</fullName>
    </alternativeName>
    <alternativeName>
        <fullName>DAHP synthase</fullName>
    </alternativeName>
    <alternativeName>
        <fullName>Phospho-2-keto-3-deoxyheptonate aldolase</fullName>
    </alternativeName>
</protein>